<keyword id="KW-0175">Coiled coil</keyword>
<keyword id="KW-1185">Reference proteome</keyword>
<keyword id="KW-0943">RNA-mediated gene silencing</keyword>
<accession>F4JH53</accession>
<accession>O23064</accession>
<gene>
    <name evidence="6" type="primary">FDM2</name>
    <name evidence="8" type="synonym">IDNL2</name>
    <name evidence="7" type="synonym">IDP2</name>
    <name evidence="9" type="ordered locus">At4g00380</name>
    <name evidence="10" type="ORF">A_IG005I10.22</name>
    <name evidence="11" type="ORF">F5I10.22</name>
</gene>
<proteinExistence type="evidence at protein level"/>
<dbReference type="EMBL" id="AF013293">
    <property type="protein sequence ID" value="AAB62840.1"/>
    <property type="status" value="ALT_SEQ"/>
    <property type="molecule type" value="Genomic_DNA"/>
</dbReference>
<dbReference type="EMBL" id="AF195115">
    <property type="protein sequence ID" value="AAF02798.1"/>
    <property type="status" value="ALT_SEQ"/>
    <property type="molecule type" value="Genomic_DNA"/>
</dbReference>
<dbReference type="EMBL" id="AL161471">
    <property type="protein sequence ID" value="CAB80796.1"/>
    <property type="status" value="ALT_SEQ"/>
    <property type="molecule type" value="Genomic_DNA"/>
</dbReference>
<dbReference type="EMBL" id="CP002687">
    <property type="protein sequence ID" value="AEE81871.1"/>
    <property type="molecule type" value="Genomic_DNA"/>
</dbReference>
<dbReference type="EMBL" id="CP002687">
    <property type="protein sequence ID" value="ANM67981.1"/>
    <property type="molecule type" value="Genomic_DNA"/>
</dbReference>
<dbReference type="PIR" id="T01533">
    <property type="entry name" value="T01533"/>
</dbReference>
<dbReference type="RefSeq" id="NP_001319829.1">
    <property type="nucleotide sequence ID" value="NM_001340242.1"/>
</dbReference>
<dbReference type="RefSeq" id="NP_567176.2">
    <property type="nucleotide sequence ID" value="NM_116262.3"/>
</dbReference>
<dbReference type="SMR" id="F4JH53"/>
<dbReference type="BioGRID" id="13307">
    <property type="interactions" value="1"/>
</dbReference>
<dbReference type="FunCoup" id="F4JH53">
    <property type="interactions" value="51"/>
</dbReference>
<dbReference type="STRING" id="3702.F4JH53"/>
<dbReference type="PaxDb" id="3702-AT4G00380.1"/>
<dbReference type="ProteomicsDB" id="232077"/>
<dbReference type="EnsemblPlants" id="AT4G00380.1">
    <property type="protein sequence ID" value="AT4G00380.1"/>
    <property type="gene ID" value="AT4G00380"/>
</dbReference>
<dbReference type="EnsemblPlants" id="AT4G00380.3">
    <property type="protein sequence ID" value="AT4G00380.3"/>
    <property type="gene ID" value="AT4G00380"/>
</dbReference>
<dbReference type="GeneID" id="828016"/>
<dbReference type="Gramene" id="AT4G00380.1">
    <property type="protein sequence ID" value="AT4G00380.1"/>
    <property type="gene ID" value="AT4G00380"/>
</dbReference>
<dbReference type="Gramene" id="AT4G00380.3">
    <property type="protein sequence ID" value="AT4G00380.3"/>
    <property type="gene ID" value="AT4G00380"/>
</dbReference>
<dbReference type="KEGG" id="ath:AT4G00380"/>
<dbReference type="Araport" id="AT4G00380"/>
<dbReference type="TAIR" id="AT4G00380">
    <property type="gene designation" value="FDM2"/>
</dbReference>
<dbReference type="eggNOG" id="ENOG502QRE8">
    <property type="taxonomic scope" value="Eukaryota"/>
</dbReference>
<dbReference type="HOGENOM" id="CLU_021775_1_1_1"/>
<dbReference type="InParanoid" id="F4JH53"/>
<dbReference type="OMA" id="YKPLEIM"/>
<dbReference type="PRO" id="PR:F4JH53"/>
<dbReference type="Proteomes" id="UP000006548">
    <property type="component" value="Chromosome 4"/>
</dbReference>
<dbReference type="ExpressionAtlas" id="F4JH53">
    <property type="expression patterns" value="baseline and differential"/>
</dbReference>
<dbReference type="GO" id="GO:0080188">
    <property type="term" value="P:gene silencing by siRNA-directed DNA methylation"/>
    <property type="evidence" value="ECO:0000316"/>
    <property type="project" value="TAIR"/>
</dbReference>
<dbReference type="GO" id="GO:0010569">
    <property type="term" value="P:regulation of double-strand break repair via homologous recombination"/>
    <property type="evidence" value="ECO:0000270"/>
    <property type="project" value="TAIR"/>
</dbReference>
<dbReference type="CDD" id="cd12266">
    <property type="entry name" value="RRM_like_XS"/>
    <property type="match status" value="1"/>
</dbReference>
<dbReference type="Gene3D" id="3.30.70.2890">
    <property type="entry name" value="XS domain"/>
    <property type="match status" value="1"/>
</dbReference>
<dbReference type="InterPro" id="IPR045177">
    <property type="entry name" value="FDM1-5/IDN2"/>
</dbReference>
<dbReference type="InterPro" id="IPR005379">
    <property type="entry name" value="FDM1-5/IDN2_XH"/>
</dbReference>
<dbReference type="InterPro" id="IPR005380">
    <property type="entry name" value="XS_domain"/>
</dbReference>
<dbReference type="InterPro" id="IPR038588">
    <property type="entry name" value="XS_domain_sf"/>
</dbReference>
<dbReference type="InterPro" id="IPR005381">
    <property type="entry name" value="Znf-XS_domain"/>
</dbReference>
<dbReference type="PANTHER" id="PTHR21596:SF3">
    <property type="entry name" value="FACTOR OF DNA METHYLATION 1-RELATED"/>
    <property type="match status" value="1"/>
</dbReference>
<dbReference type="PANTHER" id="PTHR21596">
    <property type="entry name" value="RIBONUCLEASE P SUBUNIT P38"/>
    <property type="match status" value="1"/>
</dbReference>
<dbReference type="Pfam" id="PF03469">
    <property type="entry name" value="XH"/>
    <property type="match status" value="1"/>
</dbReference>
<dbReference type="Pfam" id="PF03468">
    <property type="entry name" value="XS"/>
    <property type="match status" value="1"/>
</dbReference>
<dbReference type="Pfam" id="PF03470">
    <property type="entry name" value="zf-XS"/>
    <property type="match status" value="1"/>
</dbReference>
<reference key="1">
    <citation type="journal article" date="1999" name="Nature">
        <title>Sequence and analysis of chromosome 4 of the plant Arabidopsis thaliana.</title>
        <authorList>
            <person name="Mayer K.F.X."/>
            <person name="Schueller C."/>
            <person name="Wambutt R."/>
            <person name="Murphy G."/>
            <person name="Volckaert G."/>
            <person name="Pohl T."/>
            <person name="Duesterhoeft A."/>
            <person name="Stiekema W."/>
            <person name="Entian K.-D."/>
            <person name="Terryn N."/>
            <person name="Harris B."/>
            <person name="Ansorge W."/>
            <person name="Brandt P."/>
            <person name="Grivell L.A."/>
            <person name="Rieger M."/>
            <person name="Weichselgartner M."/>
            <person name="de Simone V."/>
            <person name="Obermaier B."/>
            <person name="Mache R."/>
            <person name="Mueller M."/>
            <person name="Kreis M."/>
            <person name="Delseny M."/>
            <person name="Puigdomenech P."/>
            <person name="Watson M."/>
            <person name="Schmidtheini T."/>
            <person name="Reichert B."/>
            <person name="Portetelle D."/>
            <person name="Perez-Alonso M."/>
            <person name="Boutry M."/>
            <person name="Bancroft I."/>
            <person name="Vos P."/>
            <person name="Hoheisel J."/>
            <person name="Zimmermann W."/>
            <person name="Wedler H."/>
            <person name="Ridley P."/>
            <person name="Langham S.-A."/>
            <person name="McCullagh B."/>
            <person name="Bilham L."/>
            <person name="Robben J."/>
            <person name="van der Schueren J."/>
            <person name="Grymonprez B."/>
            <person name="Chuang Y.-J."/>
            <person name="Vandenbussche F."/>
            <person name="Braeken M."/>
            <person name="Weltjens I."/>
            <person name="Voet M."/>
            <person name="Bastiaens I."/>
            <person name="Aert R."/>
            <person name="Defoor E."/>
            <person name="Weitzenegger T."/>
            <person name="Bothe G."/>
            <person name="Ramsperger U."/>
            <person name="Hilbert H."/>
            <person name="Braun M."/>
            <person name="Holzer E."/>
            <person name="Brandt A."/>
            <person name="Peters S."/>
            <person name="van Staveren M."/>
            <person name="Dirkse W."/>
            <person name="Mooijman P."/>
            <person name="Klein Lankhorst R."/>
            <person name="Rose M."/>
            <person name="Hauf J."/>
            <person name="Koetter P."/>
            <person name="Berneiser S."/>
            <person name="Hempel S."/>
            <person name="Feldpausch M."/>
            <person name="Lamberth S."/>
            <person name="Van den Daele H."/>
            <person name="De Keyser A."/>
            <person name="Buysshaert C."/>
            <person name="Gielen J."/>
            <person name="Villarroel R."/>
            <person name="De Clercq R."/>
            <person name="van Montagu M."/>
            <person name="Rogers J."/>
            <person name="Cronin A."/>
            <person name="Quail M.A."/>
            <person name="Bray-Allen S."/>
            <person name="Clark L."/>
            <person name="Doggett J."/>
            <person name="Hall S."/>
            <person name="Kay M."/>
            <person name="Lennard N."/>
            <person name="McLay K."/>
            <person name="Mayes R."/>
            <person name="Pettett A."/>
            <person name="Rajandream M.A."/>
            <person name="Lyne M."/>
            <person name="Benes V."/>
            <person name="Rechmann S."/>
            <person name="Borkova D."/>
            <person name="Bloecker H."/>
            <person name="Scharfe M."/>
            <person name="Grimm M."/>
            <person name="Loehnert T.-H."/>
            <person name="Dose S."/>
            <person name="de Haan M."/>
            <person name="Maarse A.C."/>
            <person name="Schaefer M."/>
            <person name="Mueller-Auer S."/>
            <person name="Gabel C."/>
            <person name="Fuchs M."/>
            <person name="Fartmann B."/>
            <person name="Granderath K."/>
            <person name="Dauner D."/>
            <person name="Herzl A."/>
            <person name="Neumann S."/>
            <person name="Argiriou A."/>
            <person name="Vitale D."/>
            <person name="Liguori R."/>
            <person name="Piravandi E."/>
            <person name="Massenet O."/>
            <person name="Quigley F."/>
            <person name="Clabauld G."/>
            <person name="Muendlein A."/>
            <person name="Felber R."/>
            <person name="Schnabl S."/>
            <person name="Hiller R."/>
            <person name="Schmidt W."/>
            <person name="Lecharny A."/>
            <person name="Aubourg S."/>
            <person name="Chefdor F."/>
            <person name="Cooke R."/>
            <person name="Berger C."/>
            <person name="Monfort A."/>
            <person name="Casacuberta E."/>
            <person name="Gibbons T."/>
            <person name="Weber N."/>
            <person name="Vandenbol M."/>
            <person name="Bargues M."/>
            <person name="Terol J."/>
            <person name="Torres A."/>
            <person name="Perez-Perez A."/>
            <person name="Purnelle B."/>
            <person name="Bent E."/>
            <person name="Johnson S."/>
            <person name="Tacon D."/>
            <person name="Jesse T."/>
            <person name="Heijnen L."/>
            <person name="Schwarz S."/>
            <person name="Scholler P."/>
            <person name="Heber S."/>
            <person name="Francs P."/>
            <person name="Bielke C."/>
            <person name="Frishman D."/>
            <person name="Haase D."/>
            <person name="Lemcke K."/>
            <person name="Mewes H.-W."/>
            <person name="Stocker S."/>
            <person name="Zaccaria P."/>
            <person name="Bevan M."/>
            <person name="Wilson R.K."/>
            <person name="de la Bastide M."/>
            <person name="Habermann K."/>
            <person name="Parnell L."/>
            <person name="Dedhia N."/>
            <person name="Gnoj L."/>
            <person name="Schutz K."/>
            <person name="Huang E."/>
            <person name="Spiegel L."/>
            <person name="Sekhon M."/>
            <person name="Murray J."/>
            <person name="Sheet P."/>
            <person name="Cordes M."/>
            <person name="Abu-Threideh J."/>
            <person name="Stoneking T."/>
            <person name="Kalicki J."/>
            <person name="Graves T."/>
            <person name="Harmon G."/>
            <person name="Edwards J."/>
            <person name="Latreille P."/>
            <person name="Courtney L."/>
            <person name="Cloud J."/>
            <person name="Abbott A."/>
            <person name="Scott K."/>
            <person name="Johnson D."/>
            <person name="Minx P."/>
            <person name="Bentley D."/>
            <person name="Fulton B."/>
            <person name="Miller N."/>
            <person name="Greco T."/>
            <person name="Kemp K."/>
            <person name="Kramer J."/>
            <person name="Fulton L."/>
            <person name="Mardis E."/>
            <person name="Dante M."/>
            <person name="Pepin K."/>
            <person name="Hillier L.W."/>
            <person name="Nelson J."/>
            <person name="Spieth J."/>
            <person name="Ryan E."/>
            <person name="Andrews S."/>
            <person name="Geisel C."/>
            <person name="Layman D."/>
            <person name="Du H."/>
            <person name="Ali J."/>
            <person name="Berghoff A."/>
            <person name="Jones K."/>
            <person name="Drone K."/>
            <person name="Cotton M."/>
            <person name="Joshu C."/>
            <person name="Antonoiu B."/>
            <person name="Zidanic M."/>
            <person name="Strong C."/>
            <person name="Sun H."/>
            <person name="Lamar B."/>
            <person name="Yordan C."/>
            <person name="Ma P."/>
            <person name="Zhong J."/>
            <person name="Preston R."/>
            <person name="Vil D."/>
            <person name="Shekher M."/>
            <person name="Matero A."/>
            <person name="Shah R."/>
            <person name="Swaby I.K."/>
            <person name="O'Shaughnessy A."/>
            <person name="Rodriguez M."/>
            <person name="Hoffman J."/>
            <person name="Till S."/>
            <person name="Granat S."/>
            <person name="Shohdy N."/>
            <person name="Hasegawa A."/>
            <person name="Hameed A."/>
            <person name="Lodhi M."/>
            <person name="Johnson A."/>
            <person name="Chen E."/>
            <person name="Marra M.A."/>
            <person name="Martienssen R."/>
            <person name="McCombie W.R."/>
        </authorList>
    </citation>
    <scope>NUCLEOTIDE SEQUENCE [LARGE SCALE GENOMIC DNA]</scope>
    <source>
        <strain>cv. Columbia</strain>
    </source>
</reference>
<reference key="2">
    <citation type="journal article" date="2017" name="Plant J.">
        <title>Araport11: a complete reannotation of the Arabidopsis thaliana reference genome.</title>
        <authorList>
            <person name="Cheng C.Y."/>
            <person name="Krishnakumar V."/>
            <person name="Chan A.P."/>
            <person name="Thibaud-Nissen F."/>
            <person name="Schobel S."/>
            <person name="Town C.D."/>
        </authorList>
    </citation>
    <scope>GENOME REANNOTATION</scope>
    <source>
        <strain>cv. Columbia</strain>
    </source>
</reference>
<reference key="3">
    <citation type="journal article" date="2012" name="Nucleic Acids Res.">
        <title>A subgroup of SGS3-like proteins act redundantly in RNA-directed DNA methylation.</title>
        <authorList>
            <person name="Xie M."/>
            <person name="Ren G."/>
            <person name="Costa-Nunes P."/>
            <person name="Pontes O."/>
            <person name="Yu B."/>
        </authorList>
    </citation>
    <scope>FUNCTION</scope>
    <scope>TISSUE SPECIFICITY</scope>
    <scope>DISRUPTION PHENOTYPE</scope>
</reference>
<reference key="4">
    <citation type="journal article" date="2012" name="PLoS Genet.">
        <title>IDN2 and its paralogs form a complex required for RNA-directed DNA methylation.</title>
        <authorList>
            <person name="Zhang C.J."/>
            <person name="Ning Y.Q."/>
            <person name="Zhang S.W."/>
            <person name="Chen Q."/>
            <person name="Shao C.R."/>
            <person name="Guo Y.W."/>
            <person name="Zhou J.X."/>
            <person name="Li L."/>
            <person name="Chen S."/>
            <person name="He X.J."/>
        </authorList>
    </citation>
    <scope>IDENTIFICATION BY MASS SPECTROMETRY</scope>
    <scope>FUNCTION</scope>
    <scope>SUBUNIT</scope>
</reference>
<reference key="5">
    <citation type="journal article" date="2012" name="Proc. Natl. Acad. Sci. U.S.A.">
        <title>INVOLVED IN DE NOVO 2-containing complex involved in RNA-directed DNA methylation in Arabidopsis.</title>
        <authorList>
            <person name="Ausin I."/>
            <person name="Greenberg M.V."/>
            <person name="Simanshu D.K."/>
            <person name="Hale C.J."/>
            <person name="Vashisht A.A."/>
            <person name="Simon S.A."/>
            <person name="Lee T.F."/>
            <person name="Feng S."/>
            <person name="Espanola S.D."/>
            <person name="Meyers B.C."/>
            <person name="Wohlschlegel J.A."/>
            <person name="Patel D.J."/>
            <person name="Jacobsen S.E."/>
        </authorList>
    </citation>
    <scope>IDENTIFICATION BY MASS SPECTROMETRY</scope>
    <scope>FUNCTION</scope>
    <scope>SUBUNIT</scope>
    <scope>DISRUPTION PHENOTYPE</scope>
</reference>
<name>FDM2_ARATH</name>
<protein>
    <recommendedName>
        <fullName evidence="6">Factor of DNA methylation 2</fullName>
    </recommendedName>
    <alternativeName>
        <fullName evidence="7">Protein IDN2 PARALOG 2</fullName>
    </alternativeName>
    <alternativeName>
        <fullName>Protein IDN2-LIKE 2</fullName>
    </alternativeName>
</protein>
<organism evidence="12">
    <name type="scientific">Arabidopsis thaliana</name>
    <name type="common">Mouse-ear cress</name>
    <dbReference type="NCBI Taxonomy" id="3702"/>
    <lineage>
        <taxon>Eukaryota</taxon>
        <taxon>Viridiplantae</taxon>
        <taxon>Streptophyta</taxon>
        <taxon>Embryophyta</taxon>
        <taxon>Tracheophyta</taxon>
        <taxon>Spermatophyta</taxon>
        <taxon>Magnoliopsida</taxon>
        <taxon>eudicotyledons</taxon>
        <taxon>Gunneridae</taxon>
        <taxon>Pentapetalae</taxon>
        <taxon>rosids</taxon>
        <taxon>malvids</taxon>
        <taxon>Brassicales</taxon>
        <taxon>Brassicaceae</taxon>
        <taxon>Camelineae</taxon>
        <taxon>Arabidopsis</taxon>
    </lineage>
</organism>
<sequence>MDISDEESEISESEIEEYSKTPYHLLRSETYYKVKVNGRLRCPFCVGKKKQDYKYKELHAHATGVSKGSATRSALQKSNHLALAKFLENDLAGYAEPLPRPPVVPPLLDETEPNPHNVYVWPWMGIVVNPLKETDDKELLLDSVYWLQTLSKFKPVEVNAFWVEQDSIVGVIAKFDSDWSGFAAATELEKEFETQGSCKKEWTERSGDSESKAYGWCARADDFQSQGPIGEYLSKEGTLRTVSDILQNNVQDRNTLLDVLSNMIDMTNEDLNKAQHSYNRTAMSLQRVLDEKKNLHQAFAEETKKMQQMSLRHIQRILYDKEKLRNELDRKMRDLESRAKQLEKHEALTELERQKLDEDKRKSDAMNKSLQLASREQKKADESVLRLVEEHQRQKEDALNKILLLEKQLDTKQTLEMEIQELKGKLQVMKHLGDDDDEAVQTKMKEMNDELDDKKAELEDLESMNSVLMTKERQSNDEIQAARQKMIAGLTGLLGAESDIGVKRMGELDEKPFLDVCKLRYSANEARVEAATLCSTWKENLKNPSWQPFKREGTGDGAEEVVDEDDEQLKKLKREWGKEVHNAVKAALVEMNEYNASGRYPTSELWNFKEGRKATLKEVITFISTDIKNLKRKRT</sequence>
<evidence type="ECO:0000255" key="1"/>
<evidence type="ECO:0000256" key="2">
    <source>
        <dbReference type="SAM" id="MobiDB-lite"/>
    </source>
</evidence>
<evidence type="ECO:0000269" key="3">
    <source>
    </source>
</evidence>
<evidence type="ECO:0000269" key="4">
    <source>
    </source>
</evidence>
<evidence type="ECO:0000269" key="5">
    <source>
    </source>
</evidence>
<evidence type="ECO:0000303" key="6">
    <source>
    </source>
</evidence>
<evidence type="ECO:0000303" key="7">
    <source>
    </source>
</evidence>
<evidence type="ECO:0000303" key="8">
    <source>
    </source>
</evidence>
<evidence type="ECO:0000312" key="9">
    <source>
        <dbReference type="Araport" id="AT4G00380"/>
    </source>
</evidence>
<evidence type="ECO:0000312" key="10">
    <source>
        <dbReference type="EMBL" id="AAB62840.1"/>
    </source>
</evidence>
<evidence type="ECO:0000312" key="11">
    <source>
        <dbReference type="EMBL" id="AAF02798.1"/>
    </source>
</evidence>
<evidence type="ECO:0000312" key="12">
    <source>
        <dbReference type="EMBL" id="AEE81871.1"/>
    </source>
</evidence>
<feature type="chain" id="PRO_0000430682" description="Factor of DNA methylation 2">
    <location>
        <begin position="1"/>
        <end position="635"/>
    </location>
</feature>
<feature type="region of interest" description="Disordered" evidence="2">
    <location>
        <begin position="350"/>
        <end position="376"/>
    </location>
</feature>
<feature type="coiled-coil region" evidence="1">
    <location>
        <begin position="289"/>
        <end position="471"/>
    </location>
</feature>
<feature type="compositionally biased region" description="Basic and acidic residues" evidence="2">
    <location>
        <begin position="350"/>
        <end position="365"/>
    </location>
</feature>
<comment type="function">
    <text evidence="3 4 5">Forms a complex with IDN2 and FDM1/IDNL1 that is required for RNA-directed DNA methylation (RdDM) and that functions at a downstream step of the RdDM pathway.</text>
</comment>
<comment type="subunit">
    <text evidence="4 5">Forms a complex with IDN2 and FMD1/INDL1.</text>
</comment>
<comment type="tissue specificity">
    <text evidence="3">Highly expressed in flowers and at lower levels in roots, leaves and stems.</text>
</comment>
<comment type="disruption phenotype">
    <text evidence="3 5">No visible phenotype under normal growth conditions. The double mutants idnl1-1 and idnl2-1 show a late-flowering phenotype and reduced level of DNA methylation (PubMed:22592791). The double mutants fdm1-1 and fdm2-1 show reduced level of DNA methylation and repeat-associated small interfering RNAs (ra-siRNAs) (PubMed:22302148).</text>
</comment>
<comment type="sequence caution">
    <conflict type="erroneous gene model prediction">
        <sequence resource="EMBL-CDS" id="AAB62840"/>
    </conflict>
</comment>
<comment type="sequence caution">
    <conflict type="erroneous gene model prediction">
        <sequence resource="EMBL-CDS" id="AAF02798"/>
    </conflict>
</comment>
<comment type="sequence caution">
    <conflict type="erroneous gene model prediction">
        <sequence resource="EMBL-CDS" id="CAB80796"/>
    </conflict>
</comment>